<dbReference type="EMBL" id="M33916">
    <property type="protein sequence ID" value="AAA25366.1"/>
    <property type="molecule type" value="Genomic_DNA"/>
</dbReference>
<dbReference type="EMBL" id="D38229">
    <property type="protein sequence ID" value="BAA07402.1"/>
    <property type="molecule type" value="Genomic_DNA"/>
</dbReference>
<dbReference type="EMBL" id="D38230">
    <property type="protein sequence ID" value="BAA07403.1"/>
    <property type="molecule type" value="Genomic_DNA"/>
</dbReference>
<dbReference type="EMBL" id="LT708304">
    <property type="protein sequence ID" value="SIU01521.1"/>
    <property type="molecule type" value="Genomic_DNA"/>
</dbReference>
<dbReference type="EMBL" id="M37840">
    <property type="protein sequence ID" value="AAA25355.1"/>
    <property type="molecule type" value="Genomic_DNA"/>
</dbReference>
<dbReference type="PIR" id="A37195">
    <property type="entry name" value="A37195"/>
</dbReference>
<dbReference type="PIR" id="A43502">
    <property type="entry name" value="A43502"/>
</dbReference>
<dbReference type="PIR" id="A48320">
    <property type="entry name" value="A48320"/>
</dbReference>
<dbReference type="RefSeq" id="NP_856545.1">
    <property type="nucleotide sequence ID" value="NC_002945.3"/>
</dbReference>
<dbReference type="RefSeq" id="WP_003414644.1">
    <property type="nucleotide sequence ID" value="NC_002945.4"/>
</dbReference>
<dbReference type="SMR" id="P0A669"/>
<dbReference type="KEGG" id="mbo:BQ2027_MB2900"/>
<dbReference type="PATRIC" id="fig|233413.5.peg.3183"/>
<dbReference type="Proteomes" id="UP000001419">
    <property type="component" value="Chromosome"/>
</dbReference>
<dbReference type="GO" id="GO:0031012">
    <property type="term" value="C:extracellular matrix"/>
    <property type="evidence" value="ECO:0007669"/>
    <property type="project" value="TreeGrafter"/>
</dbReference>
<dbReference type="GO" id="GO:0005615">
    <property type="term" value="C:extracellular space"/>
    <property type="evidence" value="ECO:0007669"/>
    <property type="project" value="TreeGrafter"/>
</dbReference>
<dbReference type="GO" id="GO:0050839">
    <property type="term" value="F:cell adhesion molecule binding"/>
    <property type="evidence" value="ECO:0007669"/>
    <property type="project" value="TreeGrafter"/>
</dbReference>
<dbReference type="GO" id="GO:0007155">
    <property type="term" value="P:cell adhesion"/>
    <property type="evidence" value="ECO:0007669"/>
    <property type="project" value="TreeGrafter"/>
</dbReference>
<dbReference type="GO" id="GO:0030198">
    <property type="term" value="P:extracellular matrix organization"/>
    <property type="evidence" value="ECO:0007669"/>
    <property type="project" value="TreeGrafter"/>
</dbReference>
<dbReference type="FunFam" id="2.30.180.10:FF:000019">
    <property type="entry name" value="Cell surface lipoprotein"/>
    <property type="match status" value="1"/>
</dbReference>
<dbReference type="Gene3D" id="2.30.180.10">
    <property type="entry name" value="FAS1 domain"/>
    <property type="match status" value="1"/>
</dbReference>
<dbReference type="InterPro" id="IPR050904">
    <property type="entry name" value="Adhesion/Biosynth-related"/>
</dbReference>
<dbReference type="InterPro" id="IPR036378">
    <property type="entry name" value="FAS1_dom_sf"/>
</dbReference>
<dbReference type="InterPro" id="IPR000782">
    <property type="entry name" value="FAS1_domain"/>
</dbReference>
<dbReference type="PANTHER" id="PTHR10900:SF77">
    <property type="entry name" value="FI19380P1"/>
    <property type="match status" value="1"/>
</dbReference>
<dbReference type="PANTHER" id="PTHR10900">
    <property type="entry name" value="PERIOSTIN-RELATED"/>
    <property type="match status" value="1"/>
</dbReference>
<dbReference type="Pfam" id="PF02469">
    <property type="entry name" value="Fasciclin"/>
    <property type="match status" value="1"/>
</dbReference>
<dbReference type="SMART" id="SM00554">
    <property type="entry name" value="FAS1"/>
    <property type="match status" value="1"/>
</dbReference>
<dbReference type="SUPFAM" id="SSF82153">
    <property type="entry name" value="FAS1 domain"/>
    <property type="match status" value="1"/>
</dbReference>
<dbReference type="PROSITE" id="PS50213">
    <property type="entry name" value="FAS1"/>
    <property type="match status" value="1"/>
</dbReference>
<reference key="1">
    <citation type="journal article" date="1989" name="FEMS Microbiol. Lett.">
        <title>Complete nucleotide sequence of immunogenic protein MPB70 from Mycobacterium bovis BCG.</title>
        <authorList>
            <person name="Terasaka K."/>
            <person name="Yamaguchi R."/>
            <person name="Matsuo K."/>
            <person name="Yamazaki A."/>
            <person name="Nagai S."/>
            <person name="Yamada T."/>
        </authorList>
    </citation>
    <scope>NUCLEOTIDE SEQUENCE [GENOMIC DNA]</scope>
    <scope>PARTIAL PROTEIN SEQUENCE</scope>
    <source>
        <strain>BCG / Pasteur</strain>
        <strain>BCG / Tokyo</strain>
    </source>
</reference>
<reference key="2">
    <citation type="journal article" date="1990" name="J. Gen. Microbiol.">
        <title>Epitope mapping of the Mycobacterium bovis secretory protein MPB70 using overlapping peptide analysis.</title>
        <authorList>
            <person name="Radford A."/>
            <person name="Wood P."/>
            <person name="Billman-Jacobe H."/>
            <person name="Geysen H."/>
            <person name="Mason T."/>
            <person name="Tribbick G."/>
        </authorList>
    </citation>
    <scope>NUCLEOTIDE SEQUENCE [GENOMIC DNA]</scope>
    <source>
        <strain>BCG / Pasteur</strain>
        <strain>BCG / Tokyo</strain>
    </source>
</reference>
<reference key="3">
    <citation type="journal article" date="1995" name="Microbiology">
        <title>Differential transcription of the MPB70 genes in two major groups of Mycobacterium bovis BCG substrains.</title>
        <authorList>
            <person name="Takemitsu M."/>
            <person name="Matsumoto S."/>
            <person name="Ohara N."/>
            <person name="Kitaura H."/>
            <person name="Mizuno A."/>
            <person name="Yamada T."/>
        </authorList>
    </citation>
    <scope>NUCLEOTIDE SEQUENCE [GENOMIC DNA]</scope>
    <source>
        <strain>BCG / Pasteur</strain>
        <strain>BCG / Tokyo</strain>
    </source>
</reference>
<reference key="4">
    <citation type="journal article" date="2003" name="Proc. Natl. Acad. Sci. U.S.A.">
        <title>The complete genome sequence of Mycobacterium bovis.</title>
        <authorList>
            <person name="Garnier T."/>
            <person name="Eiglmeier K."/>
            <person name="Camus J.-C."/>
            <person name="Medina N."/>
            <person name="Mansoor H."/>
            <person name="Pryor M."/>
            <person name="Duthoy S."/>
            <person name="Grondin S."/>
            <person name="Lacroix C."/>
            <person name="Monsempe C."/>
            <person name="Simon S."/>
            <person name="Harris B."/>
            <person name="Atkin R."/>
            <person name="Doggett J."/>
            <person name="Mayes R."/>
            <person name="Keating L."/>
            <person name="Wheeler P.R."/>
            <person name="Parkhill J."/>
            <person name="Barrell B.G."/>
            <person name="Cole S.T."/>
            <person name="Gordon S.V."/>
            <person name="Hewinson R.G."/>
        </authorList>
    </citation>
    <scope>NUCLEOTIDE SEQUENCE [LARGE SCALE GENOMIC DNA]</scope>
    <source>
        <strain>ATCC BAA-935 / AF2122/97</strain>
    </source>
</reference>
<reference key="5">
    <citation type="journal article" date="2017" name="Genome Announc.">
        <title>Updated reference genome sequence and annotation of Mycobacterium bovis AF2122/97.</title>
        <authorList>
            <person name="Malone K.M."/>
            <person name="Farrell D."/>
            <person name="Stuber T.P."/>
            <person name="Schubert O.T."/>
            <person name="Aebersold R."/>
            <person name="Robbe-Austerman S."/>
            <person name="Gordon S.V."/>
        </authorList>
    </citation>
    <scope>NUCLEOTIDE SEQUENCE [LARGE SCALE GENOMIC DNA]</scope>
    <scope>GENOME REANNOTATION</scope>
    <source>
        <strain>ATCC BAA-935 / AF2122/97</strain>
    </source>
</reference>
<reference key="6">
    <citation type="journal article" date="1988" name="Infect. Immun.">
        <title>Cloning of a species-specific antigen of Mycobacterium bovis.</title>
        <authorList>
            <person name="Radford A.J."/>
            <person name="Duffield B.J."/>
            <person name="Plackett P."/>
        </authorList>
    </citation>
    <scope>NUCLEOTIDE SEQUENCE [GENOMIC DNA] OF 49-193</scope>
</reference>
<comment type="subunit">
    <text>Generally found as a monomer; homodimer in culture fluids.</text>
</comment>
<comment type="subcellular location">
    <subcellularLocation>
        <location>Secreted</location>
    </subcellularLocation>
</comment>
<comment type="miscellaneous">
    <text>Produced in high concentration by BCG Tokyo, Moreau, Russia and Sweden (high-producer substrains), whereas in BCG Pasteur, Copenhagen and Tice (low-producer substrains) it is detected at 1% (w/w) or less of the concentration of BCG Tokyo. The difference in the secretion between BCG Tokyo and Pasteur was attributed to differential transcription efficiencies.</text>
</comment>
<keyword id="KW-0903">Direct protein sequencing</keyword>
<keyword id="KW-1185">Reference proteome</keyword>
<keyword id="KW-0964">Secreted</keyword>
<keyword id="KW-0732">Signal</keyword>
<proteinExistence type="evidence at protein level"/>
<protein>
    <recommendedName>
        <fullName>Immunogenic protein MPB70</fullName>
    </recommendedName>
</protein>
<organism>
    <name type="scientific">Mycobacterium bovis (strain ATCC BAA-935 / AF2122/97)</name>
    <dbReference type="NCBI Taxonomy" id="233413"/>
    <lineage>
        <taxon>Bacteria</taxon>
        <taxon>Bacillati</taxon>
        <taxon>Actinomycetota</taxon>
        <taxon>Actinomycetes</taxon>
        <taxon>Mycobacteriales</taxon>
        <taxon>Mycobacteriaceae</taxon>
        <taxon>Mycobacterium</taxon>
        <taxon>Mycobacterium tuberculosis complex</taxon>
    </lineage>
</organism>
<accession>P0A669</accession>
<accession>A0A1R3Y2G8</accession>
<accession>Q48934</accession>
<accession>Q48946</accession>
<accession>Q48947</accession>
<accession>Q48948</accession>
<accession>Q50656</accession>
<accession>Q50769</accession>
<accession>X2BLT4</accession>
<feature type="signal peptide">
    <location>
        <begin position="1"/>
        <end position="30"/>
    </location>
</feature>
<feature type="chain" id="PRO_0000008784" description="Immunogenic protein MPB70">
    <location>
        <begin position="31"/>
        <end position="193"/>
    </location>
</feature>
<feature type="domain" description="FAS1" evidence="1">
    <location>
        <begin position="57"/>
        <end position="189"/>
    </location>
</feature>
<feature type="sequence conflict" description="In Ref. 3; AAA25366." evidence="2" ref="3">
    <original>GL</original>
    <variation>AV</variation>
    <location>
        <begin position="16"/>
        <end position="17"/>
    </location>
</feature>
<feature type="sequence conflict" description="In Ref. 6; AAA25355." evidence="2" ref="6">
    <original>P</original>
    <variation>R</variation>
    <location>
        <position position="101"/>
    </location>
</feature>
<evidence type="ECO:0000255" key="1">
    <source>
        <dbReference type="PROSITE-ProRule" id="PRU00082"/>
    </source>
</evidence>
<evidence type="ECO:0000305" key="2"/>
<sequence>MKVKNTIAATSFAAAGLAALAVAVSPPAAAGDLVGPGCAEYAAANPTGPASVQGMSQDPVAVAASNNPELTTLTAALSGQLNPQVNLVDTLNSGQYTVFAPTNAAFSKLPASTIDELKTNSSLLTSILTYHVVAGQTSPANVVGTRQTLQGASVTVTGQGNSLKVGNADVVCGGVSTANATVYMIDSVLMPPA</sequence>
<gene>
    <name type="primary">mpb70</name>
    <name type="ordered locus">BQ2027_MB2900</name>
</gene>
<name>MP70_MYCBO</name>